<accession>Q6AYT7</accession>
<name>ABD12_RAT</name>
<organism>
    <name type="scientific">Rattus norvegicus</name>
    <name type="common">Rat</name>
    <dbReference type="NCBI Taxonomy" id="10116"/>
    <lineage>
        <taxon>Eukaryota</taxon>
        <taxon>Metazoa</taxon>
        <taxon>Chordata</taxon>
        <taxon>Craniata</taxon>
        <taxon>Vertebrata</taxon>
        <taxon>Euteleostomi</taxon>
        <taxon>Mammalia</taxon>
        <taxon>Eutheria</taxon>
        <taxon>Euarchontoglires</taxon>
        <taxon>Glires</taxon>
        <taxon>Rodentia</taxon>
        <taxon>Myomorpha</taxon>
        <taxon>Muroidea</taxon>
        <taxon>Muridae</taxon>
        <taxon>Murinae</taxon>
        <taxon>Rattus</taxon>
    </lineage>
</organism>
<evidence type="ECO:0000250" key="1">
    <source>
        <dbReference type="UniProtKB" id="Q8N2K0"/>
    </source>
</evidence>
<evidence type="ECO:0000250" key="2">
    <source>
        <dbReference type="UniProtKB" id="Q99LR1"/>
    </source>
</evidence>
<evidence type="ECO:0000255" key="3"/>
<evidence type="ECO:0000256" key="4">
    <source>
        <dbReference type="SAM" id="MobiDB-lite"/>
    </source>
</evidence>
<evidence type="ECO:0000305" key="5"/>
<evidence type="ECO:0000312" key="6">
    <source>
        <dbReference type="RGD" id="1562570"/>
    </source>
</evidence>
<sequence>MRKRTEPVTLEHERCAASGSSSSGSAAAALDADCSLKQNLRLAGKGTAEPHSASDAGMKRALGRRKSLWFRLRKILLCVLGFYIAIPFLVKLCPGIQAKLIFLNFVRVPYFIDLKKPQDQGLNHTCNYYLQPEDDVTIGVWHTIPSVWWKNAQGKDQMWYEDALASNHPIILYLHGNAGTRGGDHRVELYKVLSSLGYHVVTFDYRGWGDSVGTPSERGMTYDALHVFDWIKARSGDNPVYIWGHSLGTGVATNLVRRLCERETPPDALILESPFTNIREEAKSHPFSVIYRYFPGFDWFFLDPITSSGIKFANDENMKHISCPLLILHAEDDPVVPFHLGRKLYNIAAPSRSFRDFKVQFIPFHSDLGYRHKYIYKSPELPRILREFLGKSEPERQH</sequence>
<gene>
    <name evidence="6" type="primary">Abhd12</name>
</gene>
<comment type="function">
    <text evidence="1 2">Lysophosphatidylserine (LPS) lipase that mediates the hydrolysis of lysophosphatidylserine, a class of signaling lipids that regulates immunological and neurological processes (By similarity). Represents a major lysophosphatidylserine lipase in the brain, thereby playing a key role in the central nervous system (By similarity). Also able to hydrolyze oxidized phosphatidylserine; oxidized phosphatidylserine is produced in response to severe inflammatory stress and constitutes a proapoptotic 'eat me' signal. Also has monoacylglycerol (MAG) lipase activity: hydrolyzes 2-arachidonoylglycerol (2-AG), thereby acting as a regulator of endocannabinoid signaling pathways. Has a strong preference for very-long-chain lipid substrates; substrate specificity is likely due to improved catalysis and not improved substrate binding (By similarity).</text>
</comment>
<comment type="catalytic activity">
    <reaction evidence="1">
        <text>1-(9Z-octadecenoyl)-sn-glycero-3-phospho-L-serine + H2O = sn-glycero-3-phospho-L-serine + (9Z)-octadecenoate + H(+)</text>
        <dbReference type="Rhea" id="RHEA:40499"/>
        <dbReference type="ChEBI" id="CHEBI:15377"/>
        <dbReference type="ChEBI" id="CHEBI:15378"/>
        <dbReference type="ChEBI" id="CHEBI:30823"/>
        <dbReference type="ChEBI" id="CHEBI:64765"/>
        <dbReference type="ChEBI" id="CHEBI:74617"/>
    </reaction>
</comment>
<comment type="catalytic activity">
    <reaction evidence="2">
        <text>1-(9Z-octadecenoyl)-sn-glycero-3-phospho-(1'-sn-glycerol) + H2O = sn-glycero-3-phospho-(1'-sn-glycerol) + (9Z)-octadecenoate + H(+)</text>
        <dbReference type="Rhea" id="RHEA:44584"/>
        <dbReference type="ChEBI" id="CHEBI:15377"/>
        <dbReference type="ChEBI" id="CHEBI:15378"/>
        <dbReference type="ChEBI" id="CHEBI:30823"/>
        <dbReference type="ChEBI" id="CHEBI:64717"/>
        <dbReference type="ChEBI" id="CHEBI:72828"/>
    </reaction>
</comment>
<comment type="catalytic activity">
    <reaction evidence="2">
        <text>1-(9Z-octadecenoyl)-sn-glycero-3-phospho-(1D-myo-inositol) + H2O = sn-glycero-3-phospho-1D-myo-inositol + (9Z)-octadecenoate + H(+)</text>
        <dbReference type="Rhea" id="RHEA:44588"/>
        <dbReference type="ChEBI" id="CHEBI:15377"/>
        <dbReference type="ChEBI" id="CHEBI:15378"/>
        <dbReference type="ChEBI" id="CHEBI:30823"/>
        <dbReference type="ChEBI" id="CHEBI:58444"/>
        <dbReference type="ChEBI" id="CHEBI:78762"/>
    </reaction>
</comment>
<comment type="catalytic activity">
    <reaction evidence="2">
        <text>1-(9Z-octadecenoyl)-sn-glycero-3-phosphoethanolamine + H2O = sn-glycero-3-phosphoethanolamine + (9Z)-octadecenoate + H(+)</text>
        <dbReference type="Rhea" id="RHEA:40895"/>
        <dbReference type="ChEBI" id="CHEBI:15377"/>
        <dbReference type="ChEBI" id="CHEBI:15378"/>
        <dbReference type="ChEBI" id="CHEBI:30823"/>
        <dbReference type="ChEBI" id="CHEBI:74971"/>
        <dbReference type="ChEBI" id="CHEBI:143890"/>
    </reaction>
</comment>
<comment type="catalytic activity">
    <reaction evidence="2">
        <text>1-(9Z-octadecenoyl)-sn-glycero-3-phosphocholine + H2O = 1-(9Z-octadecenoyl)-sn-glycerol + phosphocholine + H(+)</text>
        <dbReference type="Rhea" id="RHEA:41091"/>
        <dbReference type="ChEBI" id="CHEBI:15377"/>
        <dbReference type="ChEBI" id="CHEBI:15378"/>
        <dbReference type="ChEBI" id="CHEBI:28610"/>
        <dbReference type="ChEBI" id="CHEBI:75757"/>
        <dbReference type="ChEBI" id="CHEBI:295975"/>
    </reaction>
</comment>
<comment type="catalytic activity">
    <reaction evidence="1">
        <text>2-(9Z-octadecenoyl)-glycerol + H2O = glycerol + (9Z)-octadecenoate + H(+)</text>
        <dbReference type="Rhea" id="RHEA:38491"/>
        <dbReference type="ChEBI" id="CHEBI:15377"/>
        <dbReference type="ChEBI" id="CHEBI:15378"/>
        <dbReference type="ChEBI" id="CHEBI:17754"/>
        <dbReference type="ChEBI" id="CHEBI:30823"/>
        <dbReference type="ChEBI" id="CHEBI:73990"/>
    </reaction>
</comment>
<comment type="catalytic activity">
    <reaction evidence="1">
        <text>1-hexadecanoyl-sn-glycero-3-phospho-L-serine + H2O = sn-glycero-3-phospho-L-serine + hexadecanoate + H(+)</text>
        <dbReference type="Rhea" id="RHEA:44552"/>
        <dbReference type="ChEBI" id="CHEBI:7896"/>
        <dbReference type="ChEBI" id="CHEBI:15377"/>
        <dbReference type="ChEBI" id="CHEBI:15378"/>
        <dbReference type="ChEBI" id="CHEBI:64765"/>
        <dbReference type="ChEBI" id="CHEBI:75020"/>
    </reaction>
</comment>
<comment type="catalytic activity">
    <reaction evidence="1">
        <text>2-(5Z,8Z,11Z,14Z-eicosatetraenoyl)-glycerol + H2O = glycerol + (5Z,8Z,11Z,14Z)-eicosatetraenoate + H(+)</text>
        <dbReference type="Rhea" id="RHEA:26132"/>
        <dbReference type="ChEBI" id="CHEBI:15377"/>
        <dbReference type="ChEBI" id="CHEBI:15378"/>
        <dbReference type="ChEBI" id="CHEBI:17754"/>
        <dbReference type="ChEBI" id="CHEBI:32395"/>
        <dbReference type="ChEBI" id="CHEBI:52392"/>
    </reaction>
</comment>
<comment type="catalytic activity">
    <reaction evidence="1">
        <text>Hydrolyzes glycerol monoesters of long-chain fatty acids.</text>
        <dbReference type="EC" id="3.1.1.23"/>
    </reaction>
</comment>
<comment type="catalytic activity">
    <reaction evidence="1">
        <text>1-decanoylglycerol + H2O = decanoate + glycerol + H(+)</text>
        <dbReference type="Rhea" id="RHEA:44320"/>
        <dbReference type="ChEBI" id="CHEBI:15377"/>
        <dbReference type="ChEBI" id="CHEBI:15378"/>
        <dbReference type="ChEBI" id="CHEBI:17754"/>
        <dbReference type="ChEBI" id="CHEBI:27689"/>
        <dbReference type="ChEBI" id="CHEBI:75547"/>
    </reaction>
</comment>
<comment type="catalytic activity">
    <reaction evidence="1">
        <text>1-dodecanoylglycerol + H2O = dodecanoate + glycerol + H(+)</text>
        <dbReference type="Rhea" id="RHEA:44316"/>
        <dbReference type="ChEBI" id="CHEBI:15377"/>
        <dbReference type="ChEBI" id="CHEBI:15378"/>
        <dbReference type="ChEBI" id="CHEBI:17754"/>
        <dbReference type="ChEBI" id="CHEBI:18262"/>
        <dbReference type="ChEBI" id="CHEBI:75539"/>
    </reaction>
</comment>
<comment type="catalytic activity">
    <reaction evidence="1">
        <text>1-tetradecanoylglycerol + H2O = tetradecanoate + glycerol + H(+)</text>
        <dbReference type="Rhea" id="RHEA:44312"/>
        <dbReference type="ChEBI" id="CHEBI:15377"/>
        <dbReference type="ChEBI" id="CHEBI:15378"/>
        <dbReference type="ChEBI" id="CHEBI:17754"/>
        <dbReference type="ChEBI" id="CHEBI:30807"/>
        <dbReference type="ChEBI" id="CHEBI:75562"/>
    </reaction>
</comment>
<comment type="catalytic activity">
    <reaction evidence="1">
        <text>2-hexadecanoylglycerol + H2O = glycerol + hexadecanoate + H(+)</text>
        <dbReference type="Rhea" id="RHEA:39963"/>
        <dbReference type="ChEBI" id="CHEBI:7896"/>
        <dbReference type="ChEBI" id="CHEBI:15377"/>
        <dbReference type="ChEBI" id="CHEBI:15378"/>
        <dbReference type="ChEBI" id="CHEBI:17754"/>
        <dbReference type="ChEBI" id="CHEBI:75455"/>
    </reaction>
</comment>
<comment type="catalytic activity">
    <reaction evidence="1">
        <text>1-(9Z-octadecenoyl)-glycerol + H2O = glycerol + (9Z)-octadecenoate + H(+)</text>
        <dbReference type="Rhea" id="RHEA:38487"/>
        <dbReference type="ChEBI" id="CHEBI:15377"/>
        <dbReference type="ChEBI" id="CHEBI:15378"/>
        <dbReference type="ChEBI" id="CHEBI:17754"/>
        <dbReference type="ChEBI" id="CHEBI:30823"/>
        <dbReference type="ChEBI" id="CHEBI:75342"/>
    </reaction>
</comment>
<comment type="catalytic activity">
    <reaction evidence="1">
        <text>2-(9Z,12Z-octadecadienoyl)-glycerol + H2O = (9Z,12Z)-octadecadienoate + glycerol + H(+)</text>
        <dbReference type="Rhea" id="RHEA:44732"/>
        <dbReference type="ChEBI" id="CHEBI:15377"/>
        <dbReference type="ChEBI" id="CHEBI:15378"/>
        <dbReference type="ChEBI" id="CHEBI:17754"/>
        <dbReference type="ChEBI" id="CHEBI:30245"/>
        <dbReference type="ChEBI" id="CHEBI:75457"/>
    </reaction>
</comment>
<comment type="catalytic activity">
    <reaction evidence="1">
        <text>1-(5Z,8Z,11Z,14Z-eicosatetraenoyl)-glycerol + H2O = glycerol + (5Z,8Z,11Z,14Z)-eicosatetraenoate + H(+)</text>
        <dbReference type="Rhea" id="RHEA:44728"/>
        <dbReference type="ChEBI" id="CHEBI:15377"/>
        <dbReference type="ChEBI" id="CHEBI:15378"/>
        <dbReference type="ChEBI" id="CHEBI:17754"/>
        <dbReference type="ChEBI" id="CHEBI:32395"/>
        <dbReference type="ChEBI" id="CHEBI:75612"/>
    </reaction>
</comment>
<comment type="catalytic activity">
    <reaction evidence="1">
        <text>1-(9Z,12Z-octadecadienoyl)-glycerol + H2O = (9Z,12Z)-octadecadienoate + glycerol + H(+)</text>
        <dbReference type="Rhea" id="RHEA:48428"/>
        <dbReference type="ChEBI" id="CHEBI:15377"/>
        <dbReference type="ChEBI" id="CHEBI:15378"/>
        <dbReference type="ChEBI" id="CHEBI:17754"/>
        <dbReference type="ChEBI" id="CHEBI:30245"/>
        <dbReference type="ChEBI" id="CHEBI:75568"/>
    </reaction>
</comment>
<comment type="catalytic activity">
    <reaction evidence="1">
        <text>1-hexadecanoylglycerol + H2O = glycerol + hexadecanoate + H(+)</text>
        <dbReference type="Rhea" id="RHEA:39959"/>
        <dbReference type="ChEBI" id="CHEBI:7896"/>
        <dbReference type="ChEBI" id="CHEBI:15377"/>
        <dbReference type="ChEBI" id="CHEBI:15378"/>
        <dbReference type="ChEBI" id="CHEBI:17754"/>
        <dbReference type="ChEBI" id="CHEBI:69081"/>
    </reaction>
</comment>
<comment type="catalytic activity">
    <reaction evidence="1">
        <text>1-octadecanoylglycerol + H2O = octadecanoate + glycerol + H(+)</text>
        <dbReference type="Rhea" id="RHEA:38363"/>
        <dbReference type="ChEBI" id="CHEBI:15377"/>
        <dbReference type="ChEBI" id="CHEBI:15378"/>
        <dbReference type="ChEBI" id="CHEBI:17754"/>
        <dbReference type="ChEBI" id="CHEBI:25629"/>
        <dbReference type="ChEBI" id="CHEBI:75555"/>
    </reaction>
</comment>
<comment type="catalytic activity">
    <reaction evidence="1">
        <text>1-octadecanoyl-2-(9,10-epoxyoctadecanoyl)-sn-glycero-3-phospho-L-serine + H2O = 9,10-epoxyoctadecanoate + 1-octadecanoyl-sn-glycero-3-phosphoserine + H(+)</text>
        <dbReference type="Rhea" id="RHEA:59364"/>
        <dbReference type="ChEBI" id="CHEBI:15377"/>
        <dbReference type="ChEBI" id="CHEBI:15378"/>
        <dbReference type="ChEBI" id="CHEBI:84467"/>
        <dbReference type="ChEBI" id="CHEBI:85195"/>
        <dbReference type="ChEBI" id="CHEBI:143087"/>
    </reaction>
</comment>
<comment type="catalytic activity">
    <reaction evidence="1">
        <text>1-octadecanoyl-2-(10-hydroxyoctadecanoyl)-sn-glycero-3-phospho-L-serine + H2O = 1-octadecanoyl-sn-glycero-3-phosphoserine + 10-hydroxyoctadecanoate + H(+)</text>
        <dbReference type="Rhea" id="RHEA:59368"/>
        <dbReference type="ChEBI" id="CHEBI:15377"/>
        <dbReference type="ChEBI" id="CHEBI:15378"/>
        <dbReference type="ChEBI" id="CHEBI:84467"/>
        <dbReference type="ChEBI" id="CHEBI:143088"/>
        <dbReference type="ChEBI" id="CHEBI:143089"/>
    </reaction>
</comment>
<comment type="catalytic activity">
    <reaction evidence="1">
        <text>1-hexadecanoyl-2-(10-hydroxyoctadecanoyl)-sn-glycero-3-phospho-L-serine + H2O = 10-hydroxyoctadecanoate + 1-hexadecanoyl-sn-glycero-3-phospho-L-serine + H(+)</text>
        <dbReference type="Rhea" id="RHEA:59372"/>
        <dbReference type="ChEBI" id="CHEBI:15377"/>
        <dbReference type="ChEBI" id="CHEBI:15378"/>
        <dbReference type="ChEBI" id="CHEBI:75020"/>
        <dbReference type="ChEBI" id="CHEBI:143089"/>
        <dbReference type="ChEBI" id="CHEBI:143094"/>
    </reaction>
</comment>
<comment type="subcellular location">
    <subcellularLocation>
        <location evidence="1">Endoplasmic reticulum membrane</location>
        <topology evidence="3">Single-pass membrane protein</topology>
    </subcellularLocation>
</comment>
<comment type="similarity">
    <text evidence="5">Belongs to the serine esterase family.</text>
</comment>
<keyword id="KW-0256">Endoplasmic reticulum</keyword>
<keyword id="KW-0325">Glycoprotein</keyword>
<keyword id="KW-0378">Hydrolase</keyword>
<keyword id="KW-0443">Lipid metabolism</keyword>
<keyword id="KW-0472">Membrane</keyword>
<keyword id="KW-1185">Reference proteome</keyword>
<keyword id="KW-0812">Transmembrane</keyword>
<keyword id="KW-1133">Transmembrane helix</keyword>
<feature type="chain" id="PRO_0000375809" description="Lysophosphatidylserine lipase ABHD12">
    <location>
        <begin position="1"/>
        <end position="398"/>
    </location>
</feature>
<feature type="topological domain" description="Cytoplasmic" evidence="2">
    <location>
        <begin position="1"/>
        <end position="74"/>
    </location>
</feature>
<feature type="transmembrane region" description="Helical" evidence="2">
    <location>
        <begin position="75"/>
        <end position="95"/>
    </location>
</feature>
<feature type="topological domain" description="Extracellular" evidence="2">
    <location>
        <begin position="96"/>
        <end position="398"/>
    </location>
</feature>
<feature type="region of interest" description="Disordered" evidence="4">
    <location>
        <begin position="1"/>
        <end position="24"/>
    </location>
</feature>
<feature type="compositionally biased region" description="Basic and acidic residues" evidence="4">
    <location>
        <begin position="1"/>
        <end position="15"/>
    </location>
</feature>
<feature type="active site" description="Nucleophile" evidence="1">
    <location>
        <position position="246"/>
    </location>
</feature>
<feature type="active site" description="Charge relay system" evidence="1">
    <location>
        <position position="333"/>
    </location>
</feature>
<feature type="active site" description="Charge relay system" evidence="1">
    <location>
        <position position="372"/>
    </location>
</feature>
<feature type="glycosylation site" description="N-linked (GlcNAc...) asparagine" evidence="3">
    <location>
        <position position="123"/>
    </location>
</feature>
<dbReference type="EC" id="3.1.-.-" evidence="1"/>
<dbReference type="EC" id="3.1.1.23" evidence="1"/>
<dbReference type="EMBL" id="CH474050">
    <property type="protein sequence ID" value="EDL86136.1"/>
    <property type="molecule type" value="Genomic_DNA"/>
</dbReference>
<dbReference type="EMBL" id="BC078918">
    <property type="protein sequence ID" value="AAH78918.1"/>
    <property type="molecule type" value="mRNA"/>
</dbReference>
<dbReference type="RefSeq" id="NP_001019485.1">
    <property type="nucleotide sequence ID" value="NM_001024314.2"/>
</dbReference>
<dbReference type="SMR" id="Q6AYT7"/>
<dbReference type="FunCoup" id="Q6AYT7">
    <property type="interactions" value="2670"/>
</dbReference>
<dbReference type="STRING" id="10116.ENSRNOP00000010640"/>
<dbReference type="ChEMBL" id="CHEMBL3708071"/>
<dbReference type="ESTHER" id="ratno-q6ayt7">
    <property type="family name" value="ABHD12-PHARC"/>
</dbReference>
<dbReference type="GlyCosmos" id="Q6AYT7">
    <property type="glycosylation" value="1 site, No reported glycans"/>
</dbReference>
<dbReference type="GlyGen" id="Q6AYT7">
    <property type="glycosylation" value="1 site"/>
</dbReference>
<dbReference type="iPTMnet" id="Q6AYT7"/>
<dbReference type="PhosphoSitePlus" id="Q6AYT7"/>
<dbReference type="jPOST" id="Q6AYT7"/>
<dbReference type="PaxDb" id="10116-ENSRNOP00000010640"/>
<dbReference type="Ensembl" id="ENSRNOT00000010641.6">
    <property type="protein sequence ID" value="ENSRNOP00000010640.5"/>
    <property type="gene ID" value="ENSRNOG00000036934.3"/>
</dbReference>
<dbReference type="GeneID" id="499913"/>
<dbReference type="KEGG" id="rno:499913"/>
<dbReference type="UCSC" id="RGD:1562570">
    <property type="organism name" value="rat"/>
</dbReference>
<dbReference type="AGR" id="RGD:1562570"/>
<dbReference type="CTD" id="26090"/>
<dbReference type="RGD" id="1562570">
    <property type="gene designation" value="Abhd12"/>
</dbReference>
<dbReference type="eggNOG" id="KOG1552">
    <property type="taxonomic scope" value="Eukaryota"/>
</dbReference>
<dbReference type="GeneTree" id="ENSGT00940000160517"/>
<dbReference type="HOGENOM" id="CLU_029375_1_0_1"/>
<dbReference type="InParanoid" id="Q6AYT7"/>
<dbReference type="OMA" id="YELHNCL"/>
<dbReference type="OrthoDB" id="10249433at2759"/>
<dbReference type="PhylomeDB" id="Q6AYT7"/>
<dbReference type="TreeFam" id="TF315122"/>
<dbReference type="Reactome" id="R-RNO-426048">
    <property type="pathway name" value="Arachidonate production from DAG"/>
</dbReference>
<dbReference type="PRO" id="PR:Q6AYT7"/>
<dbReference type="Proteomes" id="UP000002494">
    <property type="component" value="Chromosome 3"/>
</dbReference>
<dbReference type="Proteomes" id="UP000234681">
    <property type="component" value="Chromosome 3"/>
</dbReference>
<dbReference type="Bgee" id="ENSRNOG00000036934">
    <property type="expression patterns" value="Expressed in cerebellum and 20 other cell types or tissues"/>
</dbReference>
<dbReference type="GO" id="GO:0032281">
    <property type="term" value="C:AMPA glutamate receptor complex"/>
    <property type="evidence" value="ECO:0000266"/>
    <property type="project" value="RGD"/>
</dbReference>
<dbReference type="GO" id="GO:0005737">
    <property type="term" value="C:cytoplasm"/>
    <property type="evidence" value="ECO:0000266"/>
    <property type="project" value="RGD"/>
</dbReference>
<dbReference type="GO" id="GO:0032839">
    <property type="term" value="C:dendrite cytoplasm"/>
    <property type="evidence" value="ECO:0000266"/>
    <property type="project" value="RGD"/>
</dbReference>
<dbReference type="GO" id="GO:0005789">
    <property type="term" value="C:endoplasmic reticulum membrane"/>
    <property type="evidence" value="ECO:0000250"/>
    <property type="project" value="UniProtKB"/>
</dbReference>
<dbReference type="GO" id="GO:0016020">
    <property type="term" value="C:membrane"/>
    <property type="evidence" value="ECO:0000250"/>
    <property type="project" value="UniProtKB"/>
</dbReference>
<dbReference type="GO" id="GO:0004622">
    <property type="term" value="F:lysophospholipase activity"/>
    <property type="evidence" value="ECO:0000250"/>
    <property type="project" value="UniProtKB"/>
</dbReference>
<dbReference type="GO" id="GO:0047372">
    <property type="term" value="F:monoacylglycerol lipase activity"/>
    <property type="evidence" value="ECO:0000250"/>
    <property type="project" value="UniProtKB"/>
</dbReference>
<dbReference type="GO" id="GO:0008474">
    <property type="term" value="F:palmitoyl-(protein) hydrolase activity"/>
    <property type="evidence" value="ECO:0000266"/>
    <property type="project" value="RGD"/>
</dbReference>
<dbReference type="GO" id="GO:0004620">
    <property type="term" value="F:phospholipase activity"/>
    <property type="evidence" value="ECO:0000250"/>
    <property type="project" value="UniProtKB"/>
</dbReference>
<dbReference type="GO" id="GO:0046464">
    <property type="term" value="P:acylglycerol catabolic process"/>
    <property type="evidence" value="ECO:0000250"/>
    <property type="project" value="UniProtKB"/>
</dbReference>
<dbReference type="GO" id="GO:0007628">
    <property type="term" value="P:adult walking behavior"/>
    <property type="evidence" value="ECO:0000266"/>
    <property type="project" value="RGD"/>
</dbReference>
<dbReference type="GO" id="GO:0046475">
    <property type="term" value="P:glycerophospholipid catabolic process"/>
    <property type="evidence" value="ECO:0000266"/>
    <property type="project" value="RGD"/>
</dbReference>
<dbReference type="GO" id="GO:0052651">
    <property type="term" value="P:monoacylglycerol catabolic process"/>
    <property type="evidence" value="ECO:0000250"/>
    <property type="project" value="UniProtKB"/>
</dbReference>
<dbReference type="GO" id="GO:0006660">
    <property type="term" value="P:phosphatidylserine catabolic process"/>
    <property type="evidence" value="ECO:0000250"/>
    <property type="project" value="UniProtKB"/>
</dbReference>
<dbReference type="GO" id="GO:0009395">
    <property type="term" value="P:phospholipid catabolic process"/>
    <property type="evidence" value="ECO:0000250"/>
    <property type="project" value="UniProtKB"/>
</dbReference>
<dbReference type="GO" id="GO:0050727">
    <property type="term" value="P:regulation of inflammatory response"/>
    <property type="evidence" value="ECO:0000266"/>
    <property type="project" value="RGD"/>
</dbReference>
<dbReference type="GO" id="GO:0010996">
    <property type="term" value="P:response to auditory stimulus"/>
    <property type="evidence" value="ECO:0000266"/>
    <property type="project" value="RGD"/>
</dbReference>
<dbReference type="FunFam" id="3.40.50.1820:FF:000069">
    <property type="entry name" value="monoacylglycerol lipase ABHD12"/>
    <property type="match status" value="1"/>
</dbReference>
<dbReference type="Gene3D" id="3.40.50.1820">
    <property type="entry name" value="alpha/beta hydrolase"/>
    <property type="match status" value="1"/>
</dbReference>
<dbReference type="InterPro" id="IPR000073">
    <property type="entry name" value="AB_hydrolase_1"/>
</dbReference>
<dbReference type="InterPro" id="IPR029058">
    <property type="entry name" value="AB_hydrolase_fold"/>
</dbReference>
<dbReference type="PANTHER" id="PTHR12277">
    <property type="entry name" value="ALPHA/BETA HYDROLASE DOMAIN-CONTAINING PROTEIN"/>
    <property type="match status" value="1"/>
</dbReference>
<dbReference type="PANTHER" id="PTHR12277:SF61">
    <property type="entry name" value="LYSOPHOSPHATIDYLSERINE LIPASE ABHD12"/>
    <property type="match status" value="1"/>
</dbReference>
<dbReference type="Pfam" id="PF00561">
    <property type="entry name" value="Abhydrolase_1"/>
    <property type="match status" value="1"/>
</dbReference>
<dbReference type="SUPFAM" id="SSF53474">
    <property type="entry name" value="alpha/beta-Hydrolases"/>
    <property type="match status" value="1"/>
</dbReference>
<protein>
    <recommendedName>
        <fullName evidence="5">Lysophosphatidylserine lipase ABHD12</fullName>
        <ecNumber evidence="1">3.1.-.-</ecNumber>
    </recommendedName>
    <alternativeName>
        <fullName evidence="5">2-arachidonoylglycerol hydrolase ABHD12</fullName>
    </alternativeName>
    <alternativeName>
        <fullName evidence="5">Abhydrolase domain-containing protein 12</fullName>
    </alternativeName>
    <alternativeName>
        <fullName evidence="5">Monoacylglycerol lipase ABHD12</fullName>
        <ecNumber evidence="1">3.1.1.23</ecNumber>
    </alternativeName>
    <alternativeName>
        <fullName evidence="5">Oxidized phosphatidylserine lipase ABHD12</fullName>
        <ecNumber evidence="1">3.1.-.-</ecNumber>
    </alternativeName>
</protein>
<reference key="1">
    <citation type="submission" date="2005-09" db="EMBL/GenBank/DDBJ databases">
        <authorList>
            <person name="Mural R.J."/>
            <person name="Adams M.D."/>
            <person name="Myers E.W."/>
            <person name="Smith H.O."/>
            <person name="Venter J.C."/>
        </authorList>
    </citation>
    <scope>NUCLEOTIDE SEQUENCE [LARGE SCALE GENOMIC DNA]</scope>
    <source>
        <strain>Brown Norway</strain>
    </source>
</reference>
<reference key="2">
    <citation type="journal article" date="2004" name="Genome Res.">
        <title>The status, quality, and expansion of the NIH full-length cDNA project: the Mammalian Gene Collection (MGC).</title>
        <authorList>
            <consortium name="The MGC Project Team"/>
        </authorList>
    </citation>
    <scope>NUCLEOTIDE SEQUENCE [LARGE SCALE MRNA]</scope>
    <source>
        <tissue>Lung</tissue>
    </source>
</reference>
<proteinExistence type="evidence at transcript level"/>